<evidence type="ECO:0000255" key="1">
    <source>
        <dbReference type="HAMAP-Rule" id="MF_01552"/>
    </source>
</evidence>
<keyword id="KW-0067">ATP-binding</keyword>
<keyword id="KW-0436">Ligase</keyword>
<keyword id="KW-0460">Magnesium</keyword>
<keyword id="KW-0464">Manganese</keyword>
<keyword id="KW-0479">Metal-binding</keyword>
<keyword id="KW-0547">Nucleotide-binding</keyword>
<keyword id="KW-0648">Protein biosynthesis</keyword>
<protein>
    <recommendedName>
        <fullName evidence="1">Probable alpha-L-glutamate ligase 1</fullName>
        <ecNumber evidence="1">6.3.2.-</ecNumber>
    </recommendedName>
</protein>
<sequence length="301" mass="32470">MKIGILSQFPELYSTRRLVAACESRGHEAVVINTLNCYMNINSIKPSIHYQGQELTGFDAIIPRIHASVTFYGCAVVRQFEMMGVFAANDSISIARSRDKLRALQLLSRKGIGMPVTGFANKPNDIPDLINMVGGAPLVIKLLEGTQGIGVVLAETKTAAESVIEAFLGLKANIMVQEYIKESNGSDIRCFVVGDKVVASMKRQGPEGDFRSNLHLGGCGEKVKITPEERKMAVAAVKAMGLVVAGVDILRSNRGPLILEVNSAPGIEGIEQTTGISVTEPIVEYIEKMVLARKSNRAVIA</sequence>
<organism>
    <name type="scientific">Shewanella sp. (strain MR-4)</name>
    <dbReference type="NCBI Taxonomy" id="60480"/>
    <lineage>
        <taxon>Bacteria</taxon>
        <taxon>Pseudomonadati</taxon>
        <taxon>Pseudomonadota</taxon>
        <taxon>Gammaproteobacteria</taxon>
        <taxon>Alteromonadales</taxon>
        <taxon>Shewanellaceae</taxon>
        <taxon>Shewanella</taxon>
    </lineage>
</organism>
<reference key="1">
    <citation type="submission" date="2006-08" db="EMBL/GenBank/DDBJ databases">
        <title>Complete sequence of Shewanella sp. MR-4.</title>
        <authorList>
            <consortium name="US DOE Joint Genome Institute"/>
            <person name="Copeland A."/>
            <person name="Lucas S."/>
            <person name="Lapidus A."/>
            <person name="Barry K."/>
            <person name="Detter J.C."/>
            <person name="Glavina del Rio T."/>
            <person name="Hammon N."/>
            <person name="Israni S."/>
            <person name="Dalin E."/>
            <person name="Tice H."/>
            <person name="Pitluck S."/>
            <person name="Kiss H."/>
            <person name="Brettin T."/>
            <person name="Bruce D."/>
            <person name="Han C."/>
            <person name="Tapia R."/>
            <person name="Gilna P."/>
            <person name="Schmutz J."/>
            <person name="Larimer F."/>
            <person name="Land M."/>
            <person name="Hauser L."/>
            <person name="Kyrpides N."/>
            <person name="Mikhailova N."/>
            <person name="Nealson K."/>
            <person name="Konstantinidis K."/>
            <person name="Klappenbach J."/>
            <person name="Tiedje J."/>
            <person name="Richardson P."/>
        </authorList>
    </citation>
    <scope>NUCLEOTIDE SEQUENCE [LARGE SCALE GENOMIC DNA]</scope>
    <source>
        <strain>MR-4</strain>
    </source>
</reference>
<feature type="chain" id="PRO_0000340562" description="Probable alpha-L-glutamate ligase 1">
    <location>
        <begin position="1"/>
        <end position="301"/>
    </location>
</feature>
<feature type="domain" description="ATP-grasp" evidence="1">
    <location>
        <begin position="104"/>
        <end position="287"/>
    </location>
</feature>
<feature type="binding site" evidence="1">
    <location>
        <position position="141"/>
    </location>
    <ligand>
        <name>ATP</name>
        <dbReference type="ChEBI" id="CHEBI:30616"/>
    </ligand>
</feature>
<feature type="binding site" evidence="1">
    <location>
        <begin position="178"/>
        <end position="179"/>
    </location>
    <ligand>
        <name>ATP</name>
        <dbReference type="ChEBI" id="CHEBI:30616"/>
    </ligand>
</feature>
<feature type="binding site" evidence="1">
    <location>
        <position position="187"/>
    </location>
    <ligand>
        <name>ATP</name>
        <dbReference type="ChEBI" id="CHEBI:30616"/>
    </ligand>
</feature>
<feature type="binding site" evidence="1">
    <location>
        <begin position="211"/>
        <end position="213"/>
    </location>
    <ligand>
        <name>ATP</name>
        <dbReference type="ChEBI" id="CHEBI:30616"/>
    </ligand>
</feature>
<feature type="binding site" evidence="1">
    <location>
        <position position="248"/>
    </location>
    <ligand>
        <name>Mg(2+)</name>
        <dbReference type="ChEBI" id="CHEBI:18420"/>
        <label>1</label>
    </ligand>
</feature>
<feature type="binding site" evidence="1">
    <location>
        <position position="248"/>
    </location>
    <ligand>
        <name>Mn(2+)</name>
        <dbReference type="ChEBI" id="CHEBI:29035"/>
        <label>1</label>
    </ligand>
</feature>
<feature type="binding site" evidence="1">
    <location>
        <position position="260"/>
    </location>
    <ligand>
        <name>Mg(2+)</name>
        <dbReference type="ChEBI" id="CHEBI:18420"/>
        <label>1</label>
    </ligand>
</feature>
<feature type="binding site" evidence="1">
    <location>
        <position position="260"/>
    </location>
    <ligand>
        <name>Mg(2+)</name>
        <dbReference type="ChEBI" id="CHEBI:18420"/>
        <label>2</label>
    </ligand>
</feature>
<feature type="binding site" evidence="1">
    <location>
        <position position="260"/>
    </location>
    <ligand>
        <name>Mn(2+)</name>
        <dbReference type="ChEBI" id="CHEBI:29035"/>
        <label>1</label>
    </ligand>
</feature>
<feature type="binding site" evidence="1">
    <location>
        <position position="260"/>
    </location>
    <ligand>
        <name>Mn(2+)</name>
        <dbReference type="ChEBI" id="CHEBI:29035"/>
        <label>2</label>
    </ligand>
</feature>
<feature type="binding site" evidence="1">
    <location>
        <position position="262"/>
    </location>
    <ligand>
        <name>Mg(2+)</name>
        <dbReference type="ChEBI" id="CHEBI:18420"/>
        <label>2</label>
    </ligand>
</feature>
<feature type="binding site" evidence="1">
    <location>
        <position position="262"/>
    </location>
    <ligand>
        <name>Mn(2+)</name>
        <dbReference type="ChEBI" id="CHEBI:29035"/>
        <label>2</label>
    </ligand>
</feature>
<comment type="cofactor">
    <cofactor evidence="1">
        <name>Mg(2+)</name>
        <dbReference type="ChEBI" id="CHEBI:18420"/>
    </cofactor>
    <cofactor evidence="1">
        <name>Mn(2+)</name>
        <dbReference type="ChEBI" id="CHEBI:29035"/>
    </cofactor>
    <text evidence="1">Binds 2 magnesium or manganese ions per subunit.</text>
</comment>
<comment type="similarity">
    <text evidence="1">Belongs to the RimK family.</text>
</comment>
<accession>Q0HMU1</accession>
<proteinExistence type="inferred from homology"/>
<name>RIMK1_SHESM</name>
<gene>
    <name evidence="1" type="primary">rimK1</name>
    <name type="ordered locus">Shewmr4_0546</name>
</gene>
<dbReference type="EC" id="6.3.2.-" evidence="1"/>
<dbReference type="EMBL" id="CP000446">
    <property type="protein sequence ID" value="ABI37626.1"/>
    <property type="molecule type" value="Genomic_DNA"/>
</dbReference>
<dbReference type="RefSeq" id="WP_011621348.1">
    <property type="nucleotide sequence ID" value="NC_008321.1"/>
</dbReference>
<dbReference type="SMR" id="Q0HMU1"/>
<dbReference type="KEGG" id="she:Shewmr4_0546"/>
<dbReference type="HOGENOM" id="CLU_054353_0_1_6"/>
<dbReference type="GO" id="GO:0005737">
    <property type="term" value="C:cytoplasm"/>
    <property type="evidence" value="ECO:0007669"/>
    <property type="project" value="TreeGrafter"/>
</dbReference>
<dbReference type="GO" id="GO:0005524">
    <property type="term" value="F:ATP binding"/>
    <property type="evidence" value="ECO:0007669"/>
    <property type="project" value="UniProtKB-UniRule"/>
</dbReference>
<dbReference type="GO" id="GO:0046872">
    <property type="term" value="F:metal ion binding"/>
    <property type="evidence" value="ECO:0007669"/>
    <property type="project" value="UniProtKB-KW"/>
</dbReference>
<dbReference type="GO" id="GO:0018169">
    <property type="term" value="F:ribosomal S6-glutamic acid ligase activity"/>
    <property type="evidence" value="ECO:0007669"/>
    <property type="project" value="TreeGrafter"/>
</dbReference>
<dbReference type="GO" id="GO:0036211">
    <property type="term" value="P:protein modification process"/>
    <property type="evidence" value="ECO:0007669"/>
    <property type="project" value="InterPro"/>
</dbReference>
<dbReference type="GO" id="GO:0009432">
    <property type="term" value="P:SOS response"/>
    <property type="evidence" value="ECO:0007669"/>
    <property type="project" value="TreeGrafter"/>
</dbReference>
<dbReference type="GO" id="GO:0006412">
    <property type="term" value="P:translation"/>
    <property type="evidence" value="ECO:0007669"/>
    <property type="project" value="UniProtKB-KW"/>
</dbReference>
<dbReference type="FunFam" id="3.30.470.20:FF:000058">
    <property type="entry name" value="Alpha-aminoadipate--LysW ligase LysX protein"/>
    <property type="match status" value="1"/>
</dbReference>
<dbReference type="FunFam" id="3.40.50.20:FF:000004">
    <property type="entry name" value="Probable alpha-L-glutamate ligase"/>
    <property type="match status" value="1"/>
</dbReference>
<dbReference type="FunFam" id="3.30.1490.20:FF:000005">
    <property type="entry name" value="Probable alpha-L-glutamate ligase 1"/>
    <property type="match status" value="1"/>
</dbReference>
<dbReference type="Gene3D" id="3.40.50.20">
    <property type="match status" value="1"/>
</dbReference>
<dbReference type="Gene3D" id="3.30.1490.20">
    <property type="entry name" value="ATP-grasp fold, A domain"/>
    <property type="match status" value="1"/>
</dbReference>
<dbReference type="Gene3D" id="3.30.470.20">
    <property type="entry name" value="ATP-grasp fold, B domain"/>
    <property type="match status" value="1"/>
</dbReference>
<dbReference type="HAMAP" id="MF_01552">
    <property type="entry name" value="RimK"/>
    <property type="match status" value="1"/>
</dbReference>
<dbReference type="InterPro" id="IPR011761">
    <property type="entry name" value="ATP-grasp"/>
</dbReference>
<dbReference type="InterPro" id="IPR013651">
    <property type="entry name" value="ATP-grasp_RimK-type"/>
</dbReference>
<dbReference type="InterPro" id="IPR013815">
    <property type="entry name" value="ATP_grasp_subdomain_1"/>
</dbReference>
<dbReference type="InterPro" id="IPR023533">
    <property type="entry name" value="RimK"/>
</dbReference>
<dbReference type="InterPro" id="IPR041107">
    <property type="entry name" value="Rimk_N"/>
</dbReference>
<dbReference type="InterPro" id="IPR004666">
    <property type="entry name" value="Rp_bS6_RimK/Lys_biosynth_LsyX"/>
</dbReference>
<dbReference type="NCBIfam" id="NF007764">
    <property type="entry name" value="PRK10446.1"/>
    <property type="match status" value="1"/>
</dbReference>
<dbReference type="NCBIfam" id="TIGR00768">
    <property type="entry name" value="rimK_fam"/>
    <property type="match status" value="1"/>
</dbReference>
<dbReference type="PANTHER" id="PTHR21621:SF7">
    <property type="entry name" value="RIBOSOMAL PROTEIN BS6--L-GLUTAMATE LIGASE"/>
    <property type="match status" value="1"/>
</dbReference>
<dbReference type="PANTHER" id="PTHR21621">
    <property type="entry name" value="RIBOSOMAL PROTEIN S6 MODIFICATION PROTEIN"/>
    <property type="match status" value="1"/>
</dbReference>
<dbReference type="Pfam" id="PF08443">
    <property type="entry name" value="RimK"/>
    <property type="match status" value="1"/>
</dbReference>
<dbReference type="Pfam" id="PF18030">
    <property type="entry name" value="Rimk_N"/>
    <property type="match status" value="1"/>
</dbReference>
<dbReference type="SUPFAM" id="SSF56059">
    <property type="entry name" value="Glutathione synthetase ATP-binding domain-like"/>
    <property type="match status" value="1"/>
</dbReference>
<dbReference type="PROSITE" id="PS50975">
    <property type="entry name" value="ATP_GRASP"/>
    <property type="match status" value="1"/>
</dbReference>